<comment type="function">
    <text evidence="1">Digests double-stranded RNA. Involved in the processing of primary rRNA transcript to yield the immediate precursors to the large and small rRNAs (23S and 16S). Processes some mRNAs, and tRNAs when they are encoded in the rRNA operon. Processes pre-crRNA and tracrRNA of type II CRISPR loci if present in the organism.</text>
</comment>
<comment type="catalytic activity">
    <reaction evidence="1">
        <text>Endonucleolytic cleavage to 5'-phosphomonoester.</text>
        <dbReference type="EC" id="3.1.26.3"/>
    </reaction>
</comment>
<comment type="cofactor">
    <cofactor evidence="1">
        <name>Mg(2+)</name>
        <dbReference type="ChEBI" id="CHEBI:18420"/>
    </cofactor>
</comment>
<comment type="subunit">
    <text evidence="1">Homodimer.</text>
</comment>
<comment type="subcellular location">
    <subcellularLocation>
        <location evidence="1">Cytoplasm</location>
    </subcellularLocation>
</comment>
<comment type="similarity">
    <text evidence="1">Belongs to the ribonuclease III family.</text>
</comment>
<feature type="chain" id="PRO_1000075806" description="Ribonuclease 3">
    <location>
        <begin position="1"/>
        <end position="226"/>
    </location>
</feature>
<feature type="domain" description="RNase III" evidence="1">
    <location>
        <begin position="6"/>
        <end position="128"/>
    </location>
</feature>
<feature type="domain" description="DRBM" evidence="1">
    <location>
        <begin position="155"/>
        <end position="225"/>
    </location>
</feature>
<feature type="active site" evidence="1">
    <location>
        <position position="45"/>
    </location>
</feature>
<feature type="active site" evidence="1">
    <location>
        <position position="117"/>
    </location>
</feature>
<feature type="binding site" evidence="1">
    <location>
        <position position="41"/>
    </location>
    <ligand>
        <name>Mg(2+)</name>
        <dbReference type="ChEBI" id="CHEBI:18420"/>
    </ligand>
</feature>
<feature type="binding site" evidence="1">
    <location>
        <position position="114"/>
    </location>
    <ligand>
        <name>Mg(2+)</name>
        <dbReference type="ChEBI" id="CHEBI:18420"/>
    </ligand>
</feature>
<feature type="binding site" evidence="1">
    <location>
        <position position="117"/>
    </location>
    <ligand>
        <name>Mg(2+)</name>
        <dbReference type="ChEBI" id="CHEBI:18420"/>
    </ligand>
</feature>
<organism>
    <name type="scientific">Serratia proteamaculans (strain 568)</name>
    <dbReference type="NCBI Taxonomy" id="399741"/>
    <lineage>
        <taxon>Bacteria</taxon>
        <taxon>Pseudomonadati</taxon>
        <taxon>Pseudomonadota</taxon>
        <taxon>Gammaproteobacteria</taxon>
        <taxon>Enterobacterales</taxon>
        <taxon>Yersiniaceae</taxon>
        <taxon>Serratia</taxon>
    </lineage>
</organism>
<accession>A8GI25</accession>
<dbReference type="EC" id="3.1.26.3" evidence="1"/>
<dbReference type="EMBL" id="CP000826">
    <property type="protein sequence ID" value="ABV42765.1"/>
    <property type="molecule type" value="Genomic_DNA"/>
</dbReference>
<dbReference type="SMR" id="A8GI25"/>
<dbReference type="STRING" id="399741.Spro_3669"/>
<dbReference type="KEGG" id="spe:Spro_3669"/>
<dbReference type="eggNOG" id="COG0571">
    <property type="taxonomic scope" value="Bacteria"/>
</dbReference>
<dbReference type="HOGENOM" id="CLU_000907_1_1_6"/>
<dbReference type="OrthoDB" id="9805026at2"/>
<dbReference type="GO" id="GO:0005737">
    <property type="term" value="C:cytoplasm"/>
    <property type="evidence" value="ECO:0007669"/>
    <property type="project" value="UniProtKB-SubCell"/>
</dbReference>
<dbReference type="GO" id="GO:0003725">
    <property type="term" value="F:double-stranded RNA binding"/>
    <property type="evidence" value="ECO:0007669"/>
    <property type="project" value="TreeGrafter"/>
</dbReference>
<dbReference type="GO" id="GO:0046872">
    <property type="term" value="F:metal ion binding"/>
    <property type="evidence" value="ECO:0007669"/>
    <property type="project" value="UniProtKB-KW"/>
</dbReference>
<dbReference type="GO" id="GO:0004525">
    <property type="term" value="F:ribonuclease III activity"/>
    <property type="evidence" value="ECO:0007669"/>
    <property type="project" value="UniProtKB-UniRule"/>
</dbReference>
<dbReference type="GO" id="GO:0019843">
    <property type="term" value="F:rRNA binding"/>
    <property type="evidence" value="ECO:0007669"/>
    <property type="project" value="UniProtKB-KW"/>
</dbReference>
<dbReference type="GO" id="GO:0006397">
    <property type="term" value="P:mRNA processing"/>
    <property type="evidence" value="ECO:0007669"/>
    <property type="project" value="UniProtKB-UniRule"/>
</dbReference>
<dbReference type="GO" id="GO:0010468">
    <property type="term" value="P:regulation of gene expression"/>
    <property type="evidence" value="ECO:0007669"/>
    <property type="project" value="TreeGrafter"/>
</dbReference>
<dbReference type="GO" id="GO:0006364">
    <property type="term" value="P:rRNA processing"/>
    <property type="evidence" value="ECO:0007669"/>
    <property type="project" value="UniProtKB-UniRule"/>
</dbReference>
<dbReference type="GO" id="GO:0008033">
    <property type="term" value="P:tRNA processing"/>
    <property type="evidence" value="ECO:0007669"/>
    <property type="project" value="UniProtKB-KW"/>
</dbReference>
<dbReference type="CDD" id="cd10845">
    <property type="entry name" value="DSRM_RNAse_III_family"/>
    <property type="match status" value="1"/>
</dbReference>
<dbReference type="CDD" id="cd00593">
    <property type="entry name" value="RIBOc"/>
    <property type="match status" value="1"/>
</dbReference>
<dbReference type="FunFam" id="1.10.1520.10:FF:000001">
    <property type="entry name" value="Ribonuclease 3"/>
    <property type="match status" value="1"/>
</dbReference>
<dbReference type="FunFam" id="3.30.160.20:FF:000003">
    <property type="entry name" value="Ribonuclease 3"/>
    <property type="match status" value="1"/>
</dbReference>
<dbReference type="Gene3D" id="3.30.160.20">
    <property type="match status" value="1"/>
</dbReference>
<dbReference type="Gene3D" id="1.10.1520.10">
    <property type="entry name" value="Ribonuclease III domain"/>
    <property type="match status" value="1"/>
</dbReference>
<dbReference type="HAMAP" id="MF_00104">
    <property type="entry name" value="RNase_III"/>
    <property type="match status" value="1"/>
</dbReference>
<dbReference type="InterPro" id="IPR014720">
    <property type="entry name" value="dsRBD_dom"/>
</dbReference>
<dbReference type="InterPro" id="IPR011907">
    <property type="entry name" value="RNase_III"/>
</dbReference>
<dbReference type="InterPro" id="IPR000999">
    <property type="entry name" value="RNase_III_dom"/>
</dbReference>
<dbReference type="InterPro" id="IPR036389">
    <property type="entry name" value="RNase_III_sf"/>
</dbReference>
<dbReference type="NCBIfam" id="TIGR02191">
    <property type="entry name" value="RNaseIII"/>
    <property type="match status" value="1"/>
</dbReference>
<dbReference type="PANTHER" id="PTHR11207:SF0">
    <property type="entry name" value="RIBONUCLEASE 3"/>
    <property type="match status" value="1"/>
</dbReference>
<dbReference type="PANTHER" id="PTHR11207">
    <property type="entry name" value="RIBONUCLEASE III"/>
    <property type="match status" value="1"/>
</dbReference>
<dbReference type="Pfam" id="PF00035">
    <property type="entry name" value="dsrm"/>
    <property type="match status" value="1"/>
</dbReference>
<dbReference type="Pfam" id="PF14622">
    <property type="entry name" value="Ribonucleas_3_3"/>
    <property type="match status" value="1"/>
</dbReference>
<dbReference type="SMART" id="SM00358">
    <property type="entry name" value="DSRM"/>
    <property type="match status" value="1"/>
</dbReference>
<dbReference type="SMART" id="SM00535">
    <property type="entry name" value="RIBOc"/>
    <property type="match status" value="1"/>
</dbReference>
<dbReference type="SUPFAM" id="SSF54768">
    <property type="entry name" value="dsRNA-binding domain-like"/>
    <property type="match status" value="1"/>
</dbReference>
<dbReference type="SUPFAM" id="SSF69065">
    <property type="entry name" value="RNase III domain-like"/>
    <property type="match status" value="1"/>
</dbReference>
<dbReference type="PROSITE" id="PS50137">
    <property type="entry name" value="DS_RBD"/>
    <property type="match status" value="1"/>
</dbReference>
<dbReference type="PROSITE" id="PS00517">
    <property type="entry name" value="RNASE_3_1"/>
    <property type="match status" value="1"/>
</dbReference>
<dbReference type="PROSITE" id="PS50142">
    <property type="entry name" value="RNASE_3_2"/>
    <property type="match status" value="1"/>
</dbReference>
<gene>
    <name evidence="1" type="primary">rnc</name>
    <name type="ordered locus">Spro_3669</name>
</gene>
<name>RNC_SERP5</name>
<evidence type="ECO:0000255" key="1">
    <source>
        <dbReference type="HAMAP-Rule" id="MF_00104"/>
    </source>
</evidence>
<proteinExistence type="inferred from homology"/>
<reference key="1">
    <citation type="submission" date="2007-09" db="EMBL/GenBank/DDBJ databases">
        <title>Complete sequence of chromosome of Serratia proteamaculans 568.</title>
        <authorList>
            <consortium name="US DOE Joint Genome Institute"/>
            <person name="Copeland A."/>
            <person name="Lucas S."/>
            <person name="Lapidus A."/>
            <person name="Barry K."/>
            <person name="Glavina del Rio T."/>
            <person name="Dalin E."/>
            <person name="Tice H."/>
            <person name="Pitluck S."/>
            <person name="Chain P."/>
            <person name="Malfatti S."/>
            <person name="Shin M."/>
            <person name="Vergez L."/>
            <person name="Schmutz J."/>
            <person name="Larimer F."/>
            <person name="Land M."/>
            <person name="Hauser L."/>
            <person name="Kyrpides N."/>
            <person name="Kim E."/>
            <person name="Taghavi S."/>
            <person name="Newman L."/>
            <person name="Vangronsveld J."/>
            <person name="van der Lelie D."/>
            <person name="Richardson P."/>
        </authorList>
    </citation>
    <scope>NUCLEOTIDE SEQUENCE [LARGE SCALE GENOMIC DNA]</scope>
    <source>
        <strain>568</strain>
    </source>
</reference>
<sequence>MNPIVINRLQRKLGYTFQQQELLLQALTHRSASSKHNERLEFLGDSILSFVIANALFQRFPRVDEGDMSRMRATLVRGNTLAEMGREFDLGECLRLGPGELKSGGFRRESILADTVEALIGGVFLDSDIQTVERLILDWYRSRLDEISPGDKQKDPKTRLQEFLQGRHLPLPSYLVVQVRGEAHDQEFTIHCQVSGLSEPVVGTGSSRRKAEQAAAEQALIKLELE</sequence>
<keyword id="KW-0963">Cytoplasm</keyword>
<keyword id="KW-0255">Endonuclease</keyword>
<keyword id="KW-0378">Hydrolase</keyword>
<keyword id="KW-0460">Magnesium</keyword>
<keyword id="KW-0479">Metal-binding</keyword>
<keyword id="KW-0507">mRNA processing</keyword>
<keyword id="KW-0540">Nuclease</keyword>
<keyword id="KW-0694">RNA-binding</keyword>
<keyword id="KW-0698">rRNA processing</keyword>
<keyword id="KW-0699">rRNA-binding</keyword>
<keyword id="KW-0819">tRNA processing</keyword>
<protein>
    <recommendedName>
        <fullName evidence="1">Ribonuclease 3</fullName>
        <ecNumber evidence="1">3.1.26.3</ecNumber>
    </recommendedName>
    <alternativeName>
        <fullName evidence="1">Ribonuclease III</fullName>
        <shortName evidence="1">RNase III</shortName>
    </alternativeName>
</protein>